<proteinExistence type="inferred from homology"/>
<accession>A1R8M2</accession>
<name>CH10_PAEAT</name>
<sequence length="98" mass="10394">MSVSIKPLEDRIVVRPLEAEQTTASGLVIPDSAQEKPQEGEVVAIGPGRFDDNGNRVPVDVAVGDVVIYSKYGGTEVKTGGNEYLVLSARDVLAIVVK</sequence>
<reference key="1">
    <citation type="journal article" date="2006" name="PLoS Genet.">
        <title>Secrets of soil survival revealed by the genome sequence of Arthrobacter aurescens TC1.</title>
        <authorList>
            <person name="Mongodin E.F."/>
            <person name="Shapir N."/>
            <person name="Daugherty S.C."/>
            <person name="DeBoy R.T."/>
            <person name="Emerson J.B."/>
            <person name="Shvartzbeyn A."/>
            <person name="Radune D."/>
            <person name="Vamathevan J."/>
            <person name="Riggs F."/>
            <person name="Grinberg V."/>
            <person name="Khouri H.M."/>
            <person name="Wackett L.P."/>
            <person name="Nelson K.E."/>
            <person name="Sadowsky M.J."/>
        </authorList>
    </citation>
    <scope>NUCLEOTIDE SEQUENCE [LARGE SCALE GENOMIC DNA]</scope>
    <source>
        <strain>TC1</strain>
    </source>
</reference>
<gene>
    <name evidence="1" type="primary">groES</name>
    <name evidence="1" type="synonym">groS</name>
    <name type="ordered locus">AAur_2875</name>
</gene>
<keyword id="KW-0143">Chaperone</keyword>
<keyword id="KW-0963">Cytoplasm</keyword>
<dbReference type="EMBL" id="CP000474">
    <property type="protein sequence ID" value="ABM08439.1"/>
    <property type="molecule type" value="Genomic_DNA"/>
</dbReference>
<dbReference type="RefSeq" id="WP_011775524.1">
    <property type="nucleotide sequence ID" value="NC_008711.1"/>
</dbReference>
<dbReference type="SMR" id="A1R8M2"/>
<dbReference type="STRING" id="290340.AAur_2875"/>
<dbReference type="GeneID" id="97301721"/>
<dbReference type="KEGG" id="aau:AAur_2875"/>
<dbReference type="eggNOG" id="COG0234">
    <property type="taxonomic scope" value="Bacteria"/>
</dbReference>
<dbReference type="HOGENOM" id="CLU_132825_2_0_11"/>
<dbReference type="OrthoDB" id="9806791at2"/>
<dbReference type="Proteomes" id="UP000000637">
    <property type="component" value="Chromosome"/>
</dbReference>
<dbReference type="GO" id="GO:0005737">
    <property type="term" value="C:cytoplasm"/>
    <property type="evidence" value="ECO:0007669"/>
    <property type="project" value="UniProtKB-SubCell"/>
</dbReference>
<dbReference type="GO" id="GO:0005524">
    <property type="term" value="F:ATP binding"/>
    <property type="evidence" value="ECO:0007669"/>
    <property type="project" value="InterPro"/>
</dbReference>
<dbReference type="GO" id="GO:0046872">
    <property type="term" value="F:metal ion binding"/>
    <property type="evidence" value="ECO:0007669"/>
    <property type="project" value="TreeGrafter"/>
</dbReference>
<dbReference type="GO" id="GO:0044183">
    <property type="term" value="F:protein folding chaperone"/>
    <property type="evidence" value="ECO:0007669"/>
    <property type="project" value="InterPro"/>
</dbReference>
<dbReference type="GO" id="GO:0051087">
    <property type="term" value="F:protein-folding chaperone binding"/>
    <property type="evidence" value="ECO:0007669"/>
    <property type="project" value="TreeGrafter"/>
</dbReference>
<dbReference type="GO" id="GO:0051082">
    <property type="term" value="F:unfolded protein binding"/>
    <property type="evidence" value="ECO:0007669"/>
    <property type="project" value="TreeGrafter"/>
</dbReference>
<dbReference type="GO" id="GO:0051085">
    <property type="term" value="P:chaperone cofactor-dependent protein refolding"/>
    <property type="evidence" value="ECO:0007669"/>
    <property type="project" value="TreeGrafter"/>
</dbReference>
<dbReference type="CDD" id="cd00320">
    <property type="entry name" value="cpn10"/>
    <property type="match status" value="1"/>
</dbReference>
<dbReference type="FunFam" id="2.30.33.40:FF:000001">
    <property type="entry name" value="10 kDa chaperonin"/>
    <property type="match status" value="1"/>
</dbReference>
<dbReference type="Gene3D" id="2.30.33.40">
    <property type="entry name" value="GroES chaperonin"/>
    <property type="match status" value="1"/>
</dbReference>
<dbReference type="HAMAP" id="MF_00580">
    <property type="entry name" value="CH10"/>
    <property type="match status" value="1"/>
</dbReference>
<dbReference type="InterPro" id="IPR020818">
    <property type="entry name" value="Chaperonin_GroES"/>
</dbReference>
<dbReference type="InterPro" id="IPR037124">
    <property type="entry name" value="Chaperonin_GroES_sf"/>
</dbReference>
<dbReference type="InterPro" id="IPR018369">
    <property type="entry name" value="Chaprnonin_Cpn10_CS"/>
</dbReference>
<dbReference type="InterPro" id="IPR011032">
    <property type="entry name" value="GroES-like_sf"/>
</dbReference>
<dbReference type="NCBIfam" id="NF001527">
    <property type="entry name" value="PRK00364.1-2"/>
    <property type="match status" value="1"/>
</dbReference>
<dbReference type="NCBIfam" id="NF001530">
    <property type="entry name" value="PRK00364.1-6"/>
    <property type="match status" value="1"/>
</dbReference>
<dbReference type="NCBIfam" id="NF001531">
    <property type="entry name" value="PRK00364.2-2"/>
    <property type="match status" value="1"/>
</dbReference>
<dbReference type="NCBIfam" id="NF001533">
    <property type="entry name" value="PRK00364.2-4"/>
    <property type="match status" value="1"/>
</dbReference>
<dbReference type="NCBIfam" id="NF001534">
    <property type="entry name" value="PRK00364.2-5"/>
    <property type="match status" value="1"/>
</dbReference>
<dbReference type="PANTHER" id="PTHR10772">
    <property type="entry name" value="10 KDA HEAT SHOCK PROTEIN"/>
    <property type="match status" value="1"/>
</dbReference>
<dbReference type="PANTHER" id="PTHR10772:SF58">
    <property type="entry name" value="CO-CHAPERONIN GROES"/>
    <property type="match status" value="1"/>
</dbReference>
<dbReference type="Pfam" id="PF00166">
    <property type="entry name" value="Cpn10"/>
    <property type="match status" value="1"/>
</dbReference>
<dbReference type="PRINTS" id="PR00297">
    <property type="entry name" value="CHAPERONIN10"/>
</dbReference>
<dbReference type="SMART" id="SM00883">
    <property type="entry name" value="Cpn10"/>
    <property type="match status" value="1"/>
</dbReference>
<dbReference type="SUPFAM" id="SSF50129">
    <property type="entry name" value="GroES-like"/>
    <property type="match status" value="1"/>
</dbReference>
<dbReference type="PROSITE" id="PS00681">
    <property type="entry name" value="CHAPERONINS_CPN10"/>
    <property type="match status" value="1"/>
</dbReference>
<organism>
    <name type="scientific">Paenarthrobacter aurescens (strain TC1)</name>
    <dbReference type="NCBI Taxonomy" id="290340"/>
    <lineage>
        <taxon>Bacteria</taxon>
        <taxon>Bacillati</taxon>
        <taxon>Actinomycetota</taxon>
        <taxon>Actinomycetes</taxon>
        <taxon>Micrococcales</taxon>
        <taxon>Micrococcaceae</taxon>
        <taxon>Paenarthrobacter</taxon>
    </lineage>
</organism>
<feature type="chain" id="PRO_1000025205" description="Co-chaperonin GroES">
    <location>
        <begin position="1"/>
        <end position="98"/>
    </location>
</feature>
<protein>
    <recommendedName>
        <fullName evidence="1">Co-chaperonin GroES</fullName>
    </recommendedName>
    <alternativeName>
        <fullName evidence="1">10 kDa chaperonin</fullName>
    </alternativeName>
    <alternativeName>
        <fullName evidence="1">Chaperonin-10</fullName>
        <shortName evidence="1">Cpn10</shortName>
    </alternativeName>
</protein>
<comment type="function">
    <text evidence="1">Together with the chaperonin GroEL, plays an essential role in assisting protein folding. The GroEL-GroES system forms a nano-cage that allows encapsulation of the non-native substrate proteins and provides a physical environment optimized to promote and accelerate protein folding. GroES binds to the apical surface of the GroEL ring, thereby capping the opening of the GroEL channel.</text>
</comment>
<comment type="subunit">
    <text evidence="1">Heptamer of 7 subunits arranged in a ring. Interacts with the chaperonin GroEL.</text>
</comment>
<comment type="subcellular location">
    <subcellularLocation>
        <location evidence="1">Cytoplasm</location>
    </subcellularLocation>
</comment>
<comment type="similarity">
    <text evidence="1">Belongs to the GroES chaperonin family.</text>
</comment>
<evidence type="ECO:0000255" key="1">
    <source>
        <dbReference type="HAMAP-Rule" id="MF_00580"/>
    </source>
</evidence>